<sequence>MTDVLPVVAVTYSPGPHLERFLASLSLATERPVSVLLADNGSTDGTPQAAVQRYPNVRLLPTGANLGYGTAVNRTIAQLGEMAGDAGEPWVDDWVIVANPDVQWGPGSIDALLDAASRWPRAGALGPLIRDPDGSVYPSARQMPSLIRGGMHAVLGPFWPRNPWTTAYRQERLEPSERPVGWLSGSCLLVRRSAFGQVGGFDERYFMYMEDVDLGDRLGKAGWLSVYVPSAEVLHHKAHSTGRDPASHLAAHHKSTYIFLADRHSGWWRAPLRWTLRGSLALRSHLMVRSSLRRSRRRKLKLVEGRH</sequence>
<accession>P9WMY2</accession>
<accession>L0TF42</accession>
<accession>Q6MWZ0</accession>
<accession>Q7D5T2</accession>
<proteinExistence type="inferred from homology"/>
<gene>
    <name type="primary">wbbL</name>
    <name type="synonym">wbbL1</name>
    <name type="ordered locus">MT3365</name>
</gene>
<evidence type="ECO:0000250" key="1"/>
<evidence type="ECO:0000305" key="2"/>
<dbReference type="EC" id="2.4.1.289"/>
<dbReference type="EMBL" id="AE000516">
    <property type="protein sequence ID" value="AAK47706.1"/>
    <property type="status" value="ALT_INIT"/>
    <property type="molecule type" value="Genomic_DNA"/>
</dbReference>
<dbReference type="PIR" id="B70978">
    <property type="entry name" value="B70978"/>
</dbReference>
<dbReference type="SMR" id="P9WMY2"/>
<dbReference type="CAZy" id="GT2">
    <property type="family name" value="Glycosyltransferase Family 2"/>
</dbReference>
<dbReference type="KEGG" id="mtc:MT3365"/>
<dbReference type="HOGENOM" id="CLU_023845_0_0_11"/>
<dbReference type="Proteomes" id="UP000001020">
    <property type="component" value="Chromosome"/>
</dbReference>
<dbReference type="GO" id="GO:0102096">
    <property type="term" value="F:decaprenyl-N-acetyl-alpha-D-glucosaminyl-pyrophosphate:dTDP-alpha-L-rhamnose rhamnosyltransferase activity"/>
    <property type="evidence" value="ECO:0007669"/>
    <property type="project" value="UniProtKB-EC"/>
</dbReference>
<dbReference type="CDD" id="cd04186">
    <property type="entry name" value="GT_2_like_c"/>
    <property type="match status" value="1"/>
</dbReference>
<dbReference type="FunFam" id="3.90.550.10:FF:000182">
    <property type="entry name" value="dTDP-RHA:A-D-GlcNAc-diphosphoryl polyprenolA-3-L-rhamnosyl transferase"/>
    <property type="match status" value="1"/>
</dbReference>
<dbReference type="Gene3D" id="3.90.550.10">
    <property type="entry name" value="Spore Coat Polysaccharide Biosynthesis Protein SpsA, Chain A"/>
    <property type="match status" value="1"/>
</dbReference>
<dbReference type="InterPro" id="IPR001173">
    <property type="entry name" value="Glyco_trans_2-like"/>
</dbReference>
<dbReference type="InterPro" id="IPR029044">
    <property type="entry name" value="Nucleotide-diphossugar_trans"/>
</dbReference>
<dbReference type="PANTHER" id="PTHR43179">
    <property type="entry name" value="RHAMNOSYLTRANSFERASE WBBL"/>
    <property type="match status" value="1"/>
</dbReference>
<dbReference type="PANTHER" id="PTHR43179:SF7">
    <property type="entry name" value="RHAMNOSYLTRANSFERASE WBBL"/>
    <property type="match status" value="1"/>
</dbReference>
<dbReference type="Pfam" id="PF00535">
    <property type="entry name" value="Glycos_transf_2"/>
    <property type="match status" value="1"/>
</dbReference>
<dbReference type="SUPFAM" id="SSF53448">
    <property type="entry name" value="Nucleotide-diphospho-sugar transferases"/>
    <property type="match status" value="1"/>
</dbReference>
<comment type="function">
    <text evidence="1">Involved in the biosynthesis of the mycolylarabinogalactan-peptidoglycan (mAGP) complex, an essential component of the mycobacterial cell wall. Catalyzes the transfer of the rhamnosyl moiety from dTDP-rhamnosyl (dTDP-Rha) onto the decaprenyl-pyrophosphoryl-GlcNAc (C50-PP-GlcNAc), yielding rhamnosyl-decaprenyl-pyrophosphoryl-GlcNAc (Rha-C50-PP-GlcNAc).</text>
</comment>
<comment type="catalytic activity">
    <reaction>
        <text>N-acetyl-alpha-D-glucosaminyl-1-diphospho-trans,octa-cis-decaprenol + dTDP-beta-L-rhamnose = alpha-L-rhamnosyl-(1-&gt;3)-N-acetyl-alpha-D-glucosaminyl-diphospho-trans,octa-cis-decaprenol + dTDP + H(+)</text>
        <dbReference type="Rhea" id="RHEA:34487"/>
        <dbReference type="ChEBI" id="CHEBI:15378"/>
        <dbReference type="ChEBI" id="CHEBI:57510"/>
        <dbReference type="ChEBI" id="CHEBI:58369"/>
        <dbReference type="ChEBI" id="CHEBI:65080"/>
        <dbReference type="ChEBI" id="CHEBI:67209"/>
        <dbReference type="EC" id="2.4.1.289"/>
    </reaction>
</comment>
<comment type="cofactor">
    <cofactor evidence="1">
        <name>Mn(2+)</name>
        <dbReference type="ChEBI" id="CHEBI:29035"/>
    </cofactor>
    <cofactor evidence="1">
        <name>Mg(2+)</name>
        <dbReference type="ChEBI" id="CHEBI:18420"/>
    </cofactor>
</comment>
<comment type="similarity">
    <text evidence="2">Belongs to the glycosyltransferase 2 family.</text>
</comment>
<comment type="sequence caution" evidence="2">
    <conflict type="erroneous initiation">
        <sequence resource="EMBL-CDS" id="AAK47706"/>
    </conflict>
    <text>Truncated N-terminus.</text>
</comment>
<name>WBBL_MYCTO</name>
<protein>
    <recommendedName>
        <fullName>N-acetylglucosaminyl-diphospho-decaprenol L-rhamnosyltransferase</fullName>
        <ecNumber>2.4.1.289</ecNumber>
    </recommendedName>
    <alternativeName>
        <fullName>Rhamnosyltransferase WbbL</fullName>
    </alternativeName>
    <alternativeName>
        <fullName>dTDP-Rha:alpha-D-GlcNAc-pyrophosphate polyprenol, alpha-3-L-rhamnosyltransferase</fullName>
    </alternativeName>
</protein>
<feature type="chain" id="PRO_0000427222" description="N-acetylglucosaminyl-diphospho-decaprenol L-rhamnosyltransferase">
    <location>
        <begin position="1"/>
        <end position="307"/>
    </location>
</feature>
<reference key="1">
    <citation type="journal article" date="2002" name="J. Bacteriol.">
        <title>Whole-genome comparison of Mycobacterium tuberculosis clinical and laboratory strains.</title>
        <authorList>
            <person name="Fleischmann R.D."/>
            <person name="Alland D."/>
            <person name="Eisen J.A."/>
            <person name="Carpenter L."/>
            <person name="White O."/>
            <person name="Peterson J.D."/>
            <person name="DeBoy R.T."/>
            <person name="Dodson R.J."/>
            <person name="Gwinn M.L."/>
            <person name="Haft D.H."/>
            <person name="Hickey E.K."/>
            <person name="Kolonay J.F."/>
            <person name="Nelson W.C."/>
            <person name="Umayam L.A."/>
            <person name="Ermolaeva M.D."/>
            <person name="Salzberg S.L."/>
            <person name="Delcher A."/>
            <person name="Utterback T.R."/>
            <person name="Weidman J.F."/>
            <person name="Khouri H.M."/>
            <person name="Gill J."/>
            <person name="Mikula A."/>
            <person name="Bishai W."/>
            <person name="Jacobs W.R. Jr."/>
            <person name="Venter J.C."/>
            <person name="Fraser C.M."/>
        </authorList>
    </citation>
    <scope>NUCLEOTIDE SEQUENCE [LARGE SCALE GENOMIC DNA]</scope>
    <source>
        <strain>CDC 1551 / Oshkosh</strain>
    </source>
</reference>
<keyword id="KW-0328">Glycosyltransferase</keyword>
<keyword id="KW-1185">Reference proteome</keyword>
<keyword id="KW-0808">Transferase</keyword>
<organism>
    <name type="scientific">Mycobacterium tuberculosis (strain CDC 1551 / Oshkosh)</name>
    <dbReference type="NCBI Taxonomy" id="83331"/>
    <lineage>
        <taxon>Bacteria</taxon>
        <taxon>Bacillati</taxon>
        <taxon>Actinomycetota</taxon>
        <taxon>Actinomycetes</taxon>
        <taxon>Mycobacteriales</taxon>
        <taxon>Mycobacteriaceae</taxon>
        <taxon>Mycobacterium</taxon>
        <taxon>Mycobacterium tuberculosis complex</taxon>
    </lineage>
</organism>